<dbReference type="EMBL" id="AJ012585">
    <property type="protein sequence ID" value="CAA10068.1"/>
    <property type="molecule type" value="Genomic_DNA"/>
</dbReference>
<dbReference type="PDB" id="4V8P">
    <property type="method" value="X-ray"/>
    <property type="resolution" value="3.52 A"/>
    <property type="chains" value="BB/CB/EB/GB=1-391"/>
</dbReference>
<dbReference type="PDBsum" id="4V8P"/>
<dbReference type="SMR" id="O96774"/>
<dbReference type="IntAct" id="O96774">
    <property type="interactions" value="1"/>
</dbReference>
<dbReference type="OMA" id="QRTEYNK"/>
<dbReference type="GO" id="GO:0022625">
    <property type="term" value="C:cytosolic large ribosomal subunit"/>
    <property type="evidence" value="ECO:0007669"/>
    <property type="project" value="TreeGrafter"/>
</dbReference>
<dbReference type="GO" id="GO:0003723">
    <property type="term" value="F:RNA binding"/>
    <property type="evidence" value="ECO:0007669"/>
    <property type="project" value="TreeGrafter"/>
</dbReference>
<dbReference type="GO" id="GO:0003735">
    <property type="term" value="F:structural constituent of ribosome"/>
    <property type="evidence" value="ECO:0007669"/>
    <property type="project" value="InterPro"/>
</dbReference>
<dbReference type="GO" id="GO:0006412">
    <property type="term" value="P:translation"/>
    <property type="evidence" value="ECO:0007669"/>
    <property type="project" value="InterPro"/>
</dbReference>
<dbReference type="FunFam" id="2.40.30.10:FF:000079">
    <property type="entry name" value="60S ribosomal protein L3"/>
    <property type="match status" value="1"/>
</dbReference>
<dbReference type="FunFam" id="3.30.1430.10:FF:000001">
    <property type="entry name" value="60S ribosomal protein L3"/>
    <property type="match status" value="1"/>
</dbReference>
<dbReference type="FunFam" id="4.10.960.10:FF:000001">
    <property type="entry name" value="60S ribosomal protein L3"/>
    <property type="match status" value="1"/>
</dbReference>
<dbReference type="FunFam" id="2.40.30.10:FF:000351">
    <property type="entry name" value="Ribosomal protein L3"/>
    <property type="match status" value="1"/>
</dbReference>
<dbReference type="Gene3D" id="3.30.1430.10">
    <property type="match status" value="1"/>
</dbReference>
<dbReference type="Gene3D" id="4.10.960.10">
    <property type="entry name" value="Ribosomal protein L3, domain 3"/>
    <property type="match status" value="1"/>
</dbReference>
<dbReference type="Gene3D" id="2.40.30.10">
    <property type="entry name" value="Translation factors"/>
    <property type="match status" value="1"/>
</dbReference>
<dbReference type="InterPro" id="IPR045077">
    <property type="entry name" value="L3_arc_euk"/>
</dbReference>
<dbReference type="InterPro" id="IPR044892">
    <property type="entry name" value="Ribosomal_L3_dom_3_arc_sf"/>
</dbReference>
<dbReference type="InterPro" id="IPR000597">
    <property type="entry name" value="Ribosomal_uL3"/>
</dbReference>
<dbReference type="InterPro" id="IPR019926">
    <property type="entry name" value="Ribosomal_uL3_CS"/>
</dbReference>
<dbReference type="InterPro" id="IPR009000">
    <property type="entry name" value="Transl_B-barrel_sf"/>
</dbReference>
<dbReference type="NCBIfam" id="NF003261">
    <property type="entry name" value="PRK04231.1"/>
    <property type="match status" value="1"/>
</dbReference>
<dbReference type="PANTHER" id="PTHR11363">
    <property type="entry name" value="60S RIBOSOMAL PROTEIN L3-RELATED"/>
    <property type="match status" value="1"/>
</dbReference>
<dbReference type="PANTHER" id="PTHR11363:SF5">
    <property type="entry name" value="LARGE RIBOSOMAL SUBUNIT PROTEIN UL3"/>
    <property type="match status" value="1"/>
</dbReference>
<dbReference type="Pfam" id="PF00297">
    <property type="entry name" value="Ribosomal_L3"/>
    <property type="match status" value="1"/>
</dbReference>
<dbReference type="SUPFAM" id="SSF50447">
    <property type="entry name" value="Translation proteins"/>
    <property type="match status" value="1"/>
</dbReference>
<dbReference type="PROSITE" id="PS00474">
    <property type="entry name" value="RIBOSOMAL_L3"/>
    <property type="match status" value="1"/>
</dbReference>
<sequence length="391" mass="44248">MSHRKFEAPRHGSLGFRPRRRTRHHRGRCRSFPKDDPSKKPHLTAFTGFKAGMTHILREVDRSGSRHNKKEVVEAVTVIECPPMTIVGVVGYIDTPRGLRALTTVWAKTIDNNTKKRFYKNWANSNKKAFTHHEKNFDQKAQDLLLKRIEKYCSVVRVIAHTNMSKLNLRQKKNHILEIQVNGGKVAEKVAFAKSLLEKEVKVDSIFAENEMLDVLGVTKGKGFAGVIKRFGVKHLQKKTHRGYRKVGCIGAWHPSRIRFTVPRAGQLGYHHRTETNKKVYRVGKGDDASNASTAGDVTDKAITPLGGFPHYGVVKNDFIMIKGCCVGPKKRVLTLRKSIIPQTHGAAKEIINLKFIDTSSKIGHGRFQTVEEKDKFFGRDRTKKVEAKSE</sequence>
<name>RL3_TETTH</name>
<proteinExistence type="evidence at protein level"/>
<keyword id="KW-0002">3D-structure</keyword>
<keyword id="KW-0963">Cytoplasm</keyword>
<keyword id="KW-0687">Ribonucleoprotein</keyword>
<keyword id="KW-0689">Ribosomal protein</keyword>
<protein>
    <recommendedName>
        <fullName evidence="3">Large ribosomal subunit protein uL3</fullName>
    </recommendedName>
    <alternativeName>
        <fullName>Ribosomal protein L3</fullName>
    </alternativeName>
</protein>
<gene>
    <name type="primary">RPL3</name>
</gene>
<evidence type="ECO:0000250" key="1"/>
<evidence type="ECO:0000256" key="2">
    <source>
        <dbReference type="SAM" id="MobiDB-lite"/>
    </source>
</evidence>
<evidence type="ECO:0000305" key="3"/>
<comment type="function">
    <text evidence="1">The L3 protein is a component of the large subunit of cytoplasmic ribosomes.</text>
</comment>
<comment type="subcellular location">
    <subcellularLocation>
        <location evidence="1">Cytoplasm</location>
    </subcellularLocation>
</comment>
<comment type="similarity">
    <text evidence="3">Belongs to the universal ribosomal protein uL3 family.</text>
</comment>
<reference key="1">
    <citation type="submission" date="1998-11" db="EMBL/GenBank/DDBJ databases">
        <title>Cloning and characterization of the highly expressed ribosomal protein L3 of the ciliated protozoan Tetrahymena thermophila. Evidence for differential codon usage in highly expressed genes in ciliates.</title>
        <authorList>
            <person name="Larsen L.K."/>
            <person name="Andreasen P.H."/>
            <person name="Kristiansen K."/>
        </authorList>
    </citation>
    <scope>NUCLEOTIDE SEQUENCE [GENOMIC DNA]</scope>
    <source>
        <strain>B1868</strain>
    </source>
</reference>
<organism>
    <name type="scientific">Tetrahymena thermophila</name>
    <dbReference type="NCBI Taxonomy" id="5911"/>
    <lineage>
        <taxon>Eukaryota</taxon>
        <taxon>Sar</taxon>
        <taxon>Alveolata</taxon>
        <taxon>Ciliophora</taxon>
        <taxon>Intramacronucleata</taxon>
        <taxon>Oligohymenophorea</taxon>
        <taxon>Hymenostomatida</taxon>
        <taxon>Tetrahymenina</taxon>
        <taxon>Tetrahymenidae</taxon>
        <taxon>Tetrahymena</taxon>
    </lineage>
</organism>
<accession>O96774</accession>
<feature type="chain" id="PRO_0000413489" description="Large ribosomal subunit protein uL3">
    <location>
        <begin position="1"/>
        <end position="391"/>
    </location>
</feature>
<feature type="region of interest" description="Disordered" evidence="2">
    <location>
        <begin position="1"/>
        <end position="41"/>
    </location>
</feature>
<feature type="compositionally biased region" description="Basic and acidic residues" evidence="2">
    <location>
        <begin position="1"/>
        <end position="10"/>
    </location>
</feature>
<feature type="compositionally biased region" description="Basic residues" evidence="2">
    <location>
        <begin position="17"/>
        <end position="31"/>
    </location>
</feature>